<sequence length="431" mass="47602">MLDIQLLRKDLDGVAKRLADRGYTLDVAAFAALEAERRETQTRTEEMQARRNSLSKQIGAMKGKGEDTSAVMAEVGGIGDEMKASAAKLDDIQKRLSELLQGVPNLPHESVPMGKDETGNVEVRRWGTPRQFDFEVKDHVDVGTPLGLDFETGAKLSGARFTMLRGQIARLHRALAQFMIDTHTQQHGYTEVYTPYIVNPEILYGTGQLPKFADDMFRVEKGGDENTVTQYLISTSEISLTNTVRDSILEADALPIKLTAHSPCFRSEAGSYGRDTRGLIRQHQFDKVEMVQIVAPETSYAALEEMVGHAETILQKLELPYRVITLCTGDMGFSAAKTYDLEVWVPAQNTYREISSCSNTESFQARRMQARYRNAQGKPELVHTLNGSGLAVGRTLVAVLENFQNADGSVTVPAALRPYLGGIERLEVAAG</sequence>
<keyword id="KW-0030">Aminoacyl-tRNA synthetase</keyword>
<keyword id="KW-0067">ATP-binding</keyword>
<keyword id="KW-0963">Cytoplasm</keyword>
<keyword id="KW-0436">Ligase</keyword>
<keyword id="KW-0547">Nucleotide-binding</keyword>
<keyword id="KW-0648">Protein biosynthesis</keyword>
<gene>
    <name evidence="1" type="primary">serS</name>
    <name type="ordered locus">Bphyt_1044</name>
</gene>
<feature type="chain" id="PRO_1000098043" description="Serine--tRNA ligase">
    <location>
        <begin position="1"/>
        <end position="431"/>
    </location>
</feature>
<feature type="binding site" evidence="1">
    <location>
        <begin position="235"/>
        <end position="237"/>
    </location>
    <ligand>
        <name>L-serine</name>
        <dbReference type="ChEBI" id="CHEBI:33384"/>
    </ligand>
</feature>
<feature type="binding site" evidence="1">
    <location>
        <begin position="266"/>
        <end position="268"/>
    </location>
    <ligand>
        <name>ATP</name>
        <dbReference type="ChEBI" id="CHEBI:30616"/>
    </ligand>
</feature>
<feature type="binding site" evidence="1">
    <location>
        <position position="289"/>
    </location>
    <ligand>
        <name>L-serine</name>
        <dbReference type="ChEBI" id="CHEBI:33384"/>
    </ligand>
</feature>
<feature type="binding site" evidence="1">
    <location>
        <begin position="353"/>
        <end position="356"/>
    </location>
    <ligand>
        <name>ATP</name>
        <dbReference type="ChEBI" id="CHEBI:30616"/>
    </ligand>
</feature>
<feature type="binding site" evidence="1">
    <location>
        <position position="388"/>
    </location>
    <ligand>
        <name>L-serine</name>
        <dbReference type="ChEBI" id="CHEBI:33384"/>
    </ligand>
</feature>
<name>SYS_PARPJ</name>
<proteinExistence type="inferred from homology"/>
<protein>
    <recommendedName>
        <fullName evidence="1">Serine--tRNA ligase</fullName>
        <ecNumber evidence="1">6.1.1.11</ecNumber>
    </recommendedName>
    <alternativeName>
        <fullName evidence="1">Seryl-tRNA synthetase</fullName>
        <shortName evidence="1">SerRS</shortName>
    </alternativeName>
    <alternativeName>
        <fullName evidence="1">Seryl-tRNA(Ser/Sec) synthetase</fullName>
    </alternativeName>
</protein>
<reference key="1">
    <citation type="journal article" date="2011" name="J. Bacteriol.">
        <title>Complete genome sequence of the plant growth-promoting endophyte Burkholderia phytofirmans strain PsJN.</title>
        <authorList>
            <person name="Weilharter A."/>
            <person name="Mitter B."/>
            <person name="Shin M.V."/>
            <person name="Chain P.S."/>
            <person name="Nowak J."/>
            <person name="Sessitsch A."/>
        </authorList>
    </citation>
    <scope>NUCLEOTIDE SEQUENCE [LARGE SCALE GENOMIC DNA]</scope>
    <source>
        <strain>DSM 17436 / LMG 22146 / PsJN</strain>
    </source>
</reference>
<evidence type="ECO:0000255" key="1">
    <source>
        <dbReference type="HAMAP-Rule" id="MF_00176"/>
    </source>
</evidence>
<dbReference type="EC" id="6.1.1.11" evidence="1"/>
<dbReference type="EMBL" id="CP001052">
    <property type="protein sequence ID" value="ACD15463.1"/>
    <property type="molecule type" value="Genomic_DNA"/>
</dbReference>
<dbReference type="RefSeq" id="WP_012432093.1">
    <property type="nucleotide sequence ID" value="NC_010681.1"/>
</dbReference>
<dbReference type="SMR" id="B2T1A6"/>
<dbReference type="STRING" id="398527.Bphyt_1044"/>
<dbReference type="KEGG" id="bpy:Bphyt_1044"/>
<dbReference type="eggNOG" id="COG0172">
    <property type="taxonomic scope" value="Bacteria"/>
</dbReference>
<dbReference type="HOGENOM" id="CLU_023797_1_1_4"/>
<dbReference type="OrthoDB" id="9804647at2"/>
<dbReference type="UniPathway" id="UPA00906">
    <property type="reaction ID" value="UER00895"/>
</dbReference>
<dbReference type="Proteomes" id="UP000001739">
    <property type="component" value="Chromosome 1"/>
</dbReference>
<dbReference type="GO" id="GO:0005737">
    <property type="term" value="C:cytoplasm"/>
    <property type="evidence" value="ECO:0007669"/>
    <property type="project" value="UniProtKB-SubCell"/>
</dbReference>
<dbReference type="GO" id="GO:0005524">
    <property type="term" value="F:ATP binding"/>
    <property type="evidence" value="ECO:0007669"/>
    <property type="project" value="UniProtKB-UniRule"/>
</dbReference>
<dbReference type="GO" id="GO:0004828">
    <property type="term" value="F:serine-tRNA ligase activity"/>
    <property type="evidence" value="ECO:0007669"/>
    <property type="project" value="UniProtKB-UniRule"/>
</dbReference>
<dbReference type="GO" id="GO:0016260">
    <property type="term" value="P:selenocysteine biosynthetic process"/>
    <property type="evidence" value="ECO:0007669"/>
    <property type="project" value="UniProtKB-UniRule"/>
</dbReference>
<dbReference type="GO" id="GO:0006434">
    <property type="term" value="P:seryl-tRNA aminoacylation"/>
    <property type="evidence" value="ECO:0007669"/>
    <property type="project" value="UniProtKB-UniRule"/>
</dbReference>
<dbReference type="CDD" id="cd00770">
    <property type="entry name" value="SerRS_core"/>
    <property type="match status" value="1"/>
</dbReference>
<dbReference type="Gene3D" id="3.30.930.10">
    <property type="entry name" value="Bira Bifunctional Protein, Domain 2"/>
    <property type="match status" value="1"/>
</dbReference>
<dbReference type="Gene3D" id="1.10.287.40">
    <property type="entry name" value="Serine-tRNA synthetase, tRNA binding domain"/>
    <property type="match status" value="1"/>
</dbReference>
<dbReference type="HAMAP" id="MF_00176">
    <property type="entry name" value="Ser_tRNA_synth_type1"/>
    <property type="match status" value="1"/>
</dbReference>
<dbReference type="InterPro" id="IPR002314">
    <property type="entry name" value="aa-tRNA-synt_IIb"/>
</dbReference>
<dbReference type="InterPro" id="IPR006195">
    <property type="entry name" value="aa-tRNA-synth_II"/>
</dbReference>
<dbReference type="InterPro" id="IPR045864">
    <property type="entry name" value="aa-tRNA-synth_II/BPL/LPL"/>
</dbReference>
<dbReference type="InterPro" id="IPR002317">
    <property type="entry name" value="Ser-tRNA-ligase_type_1"/>
</dbReference>
<dbReference type="InterPro" id="IPR015866">
    <property type="entry name" value="Ser-tRNA-synth_1_N"/>
</dbReference>
<dbReference type="InterPro" id="IPR042103">
    <property type="entry name" value="SerRS_1_N_sf"/>
</dbReference>
<dbReference type="InterPro" id="IPR033729">
    <property type="entry name" value="SerRS_core"/>
</dbReference>
<dbReference type="InterPro" id="IPR010978">
    <property type="entry name" value="tRNA-bd_arm"/>
</dbReference>
<dbReference type="NCBIfam" id="TIGR00414">
    <property type="entry name" value="serS"/>
    <property type="match status" value="1"/>
</dbReference>
<dbReference type="PANTHER" id="PTHR43697:SF1">
    <property type="entry name" value="SERINE--TRNA LIGASE"/>
    <property type="match status" value="1"/>
</dbReference>
<dbReference type="PANTHER" id="PTHR43697">
    <property type="entry name" value="SERYL-TRNA SYNTHETASE"/>
    <property type="match status" value="1"/>
</dbReference>
<dbReference type="Pfam" id="PF02403">
    <property type="entry name" value="Seryl_tRNA_N"/>
    <property type="match status" value="1"/>
</dbReference>
<dbReference type="Pfam" id="PF00587">
    <property type="entry name" value="tRNA-synt_2b"/>
    <property type="match status" value="1"/>
</dbReference>
<dbReference type="PIRSF" id="PIRSF001529">
    <property type="entry name" value="Ser-tRNA-synth_IIa"/>
    <property type="match status" value="1"/>
</dbReference>
<dbReference type="PRINTS" id="PR00981">
    <property type="entry name" value="TRNASYNTHSER"/>
</dbReference>
<dbReference type="SUPFAM" id="SSF55681">
    <property type="entry name" value="Class II aaRS and biotin synthetases"/>
    <property type="match status" value="1"/>
</dbReference>
<dbReference type="SUPFAM" id="SSF46589">
    <property type="entry name" value="tRNA-binding arm"/>
    <property type="match status" value="1"/>
</dbReference>
<dbReference type="PROSITE" id="PS50862">
    <property type="entry name" value="AA_TRNA_LIGASE_II"/>
    <property type="match status" value="1"/>
</dbReference>
<organism>
    <name type="scientific">Paraburkholderia phytofirmans (strain DSM 17436 / LMG 22146 / PsJN)</name>
    <name type="common">Burkholderia phytofirmans</name>
    <dbReference type="NCBI Taxonomy" id="398527"/>
    <lineage>
        <taxon>Bacteria</taxon>
        <taxon>Pseudomonadati</taxon>
        <taxon>Pseudomonadota</taxon>
        <taxon>Betaproteobacteria</taxon>
        <taxon>Burkholderiales</taxon>
        <taxon>Burkholderiaceae</taxon>
        <taxon>Paraburkholderia</taxon>
    </lineage>
</organism>
<accession>B2T1A6</accession>
<comment type="function">
    <text evidence="1">Catalyzes the attachment of serine to tRNA(Ser). Is also able to aminoacylate tRNA(Sec) with serine, to form the misacylated tRNA L-seryl-tRNA(Sec), which will be further converted into selenocysteinyl-tRNA(Sec).</text>
</comment>
<comment type="catalytic activity">
    <reaction evidence="1">
        <text>tRNA(Ser) + L-serine + ATP = L-seryl-tRNA(Ser) + AMP + diphosphate + H(+)</text>
        <dbReference type="Rhea" id="RHEA:12292"/>
        <dbReference type="Rhea" id="RHEA-COMP:9669"/>
        <dbReference type="Rhea" id="RHEA-COMP:9703"/>
        <dbReference type="ChEBI" id="CHEBI:15378"/>
        <dbReference type="ChEBI" id="CHEBI:30616"/>
        <dbReference type="ChEBI" id="CHEBI:33019"/>
        <dbReference type="ChEBI" id="CHEBI:33384"/>
        <dbReference type="ChEBI" id="CHEBI:78442"/>
        <dbReference type="ChEBI" id="CHEBI:78533"/>
        <dbReference type="ChEBI" id="CHEBI:456215"/>
        <dbReference type="EC" id="6.1.1.11"/>
    </reaction>
</comment>
<comment type="catalytic activity">
    <reaction evidence="1">
        <text>tRNA(Sec) + L-serine + ATP = L-seryl-tRNA(Sec) + AMP + diphosphate + H(+)</text>
        <dbReference type="Rhea" id="RHEA:42580"/>
        <dbReference type="Rhea" id="RHEA-COMP:9742"/>
        <dbReference type="Rhea" id="RHEA-COMP:10128"/>
        <dbReference type="ChEBI" id="CHEBI:15378"/>
        <dbReference type="ChEBI" id="CHEBI:30616"/>
        <dbReference type="ChEBI" id="CHEBI:33019"/>
        <dbReference type="ChEBI" id="CHEBI:33384"/>
        <dbReference type="ChEBI" id="CHEBI:78442"/>
        <dbReference type="ChEBI" id="CHEBI:78533"/>
        <dbReference type="ChEBI" id="CHEBI:456215"/>
        <dbReference type="EC" id="6.1.1.11"/>
    </reaction>
</comment>
<comment type="pathway">
    <text evidence="1">Aminoacyl-tRNA biosynthesis; selenocysteinyl-tRNA(Sec) biosynthesis; L-seryl-tRNA(Sec) from L-serine and tRNA(Sec): step 1/1.</text>
</comment>
<comment type="subunit">
    <text evidence="1">Homodimer. The tRNA molecule binds across the dimer.</text>
</comment>
<comment type="subcellular location">
    <subcellularLocation>
        <location evidence="1">Cytoplasm</location>
    </subcellularLocation>
</comment>
<comment type="domain">
    <text evidence="1">Consists of two distinct domains, a catalytic core and a N-terminal extension that is involved in tRNA binding.</text>
</comment>
<comment type="similarity">
    <text evidence="1">Belongs to the class-II aminoacyl-tRNA synthetase family. Type-1 seryl-tRNA synthetase subfamily.</text>
</comment>